<comment type="function">
    <text evidence="1">Removes the formyl group from the N-terminal Met of newly synthesized proteins. Requires at least a dipeptide for an efficient rate of reaction. N-terminal L-methionine is a prerequisite for activity but the enzyme has broad specificity at other positions.</text>
</comment>
<comment type="catalytic activity">
    <reaction evidence="1">
        <text>N-terminal N-formyl-L-methionyl-[peptide] + H2O = N-terminal L-methionyl-[peptide] + formate</text>
        <dbReference type="Rhea" id="RHEA:24420"/>
        <dbReference type="Rhea" id="RHEA-COMP:10639"/>
        <dbReference type="Rhea" id="RHEA-COMP:10640"/>
        <dbReference type="ChEBI" id="CHEBI:15377"/>
        <dbReference type="ChEBI" id="CHEBI:15740"/>
        <dbReference type="ChEBI" id="CHEBI:49298"/>
        <dbReference type="ChEBI" id="CHEBI:64731"/>
        <dbReference type="EC" id="3.5.1.88"/>
    </reaction>
</comment>
<comment type="cofactor">
    <cofactor evidence="1">
        <name>Fe(2+)</name>
        <dbReference type="ChEBI" id="CHEBI:29033"/>
    </cofactor>
    <text evidence="1">Binds 1 Fe(2+) ion.</text>
</comment>
<comment type="similarity">
    <text evidence="1">Belongs to the polypeptide deformylase family.</text>
</comment>
<keyword id="KW-0378">Hydrolase</keyword>
<keyword id="KW-0408">Iron</keyword>
<keyword id="KW-0479">Metal-binding</keyword>
<keyword id="KW-0648">Protein biosynthesis</keyword>
<keyword id="KW-1185">Reference proteome</keyword>
<feature type="chain" id="PRO_0000082758" description="Peptide deformylase">
    <location>
        <begin position="1"/>
        <end position="175"/>
    </location>
</feature>
<feature type="active site" evidence="1">
    <location>
        <position position="135"/>
    </location>
</feature>
<feature type="binding site" evidence="1">
    <location>
        <position position="92"/>
    </location>
    <ligand>
        <name>Fe cation</name>
        <dbReference type="ChEBI" id="CHEBI:24875"/>
    </ligand>
</feature>
<feature type="binding site" evidence="1">
    <location>
        <position position="134"/>
    </location>
    <ligand>
        <name>Fe cation</name>
        <dbReference type="ChEBI" id="CHEBI:24875"/>
    </ligand>
</feature>
<feature type="binding site" evidence="1">
    <location>
        <position position="138"/>
    </location>
    <ligand>
        <name>Fe cation</name>
        <dbReference type="ChEBI" id="CHEBI:24875"/>
    </ligand>
</feature>
<reference key="1">
    <citation type="journal article" date="2003" name="Proc. Natl. Acad. Sci. U.S.A.">
        <title>The genome sequence of Blochmannia floridanus: comparative analysis of reduced genomes.</title>
        <authorList>
            <person name="Gil R."/>
            <person name="Silva F.J."/>
            <person name="Zientz E."/>
            <person name="Delmotte F."/>
            <person name="Gonzalez-Candelas F."/>
            <person name="Latorre A."/>
            <person name="Rausell C."/>
            <person name="Kamerbeek J."/>
            <person name="Gadau J."/>
            <person name="Hoelldobler B."/>
            <person name="van Ham R.C.H.J."/>
            <person name="Gross R."/>
            <person name="Moya A."/>
        </authorList>
    </citation>
    <scope>NUCLEOTIDE SEQUENCE [LARGE SCALE GENOMIC DNA]</scope>
</reference>
<accession>Q7VQC0</accession>
<evidence type="ECO:0000255" key="1">
    <source>
        <dbReference type="HAMAP-Rule" id="MF_00163"/>
    </source>
</evidence>
<sequence length="175" mass="20251">MSILQMLYYPDQRLRKIARSVSIISHDTKKIISDMFETMYFQQGIGLAATQVDIHQKIIVIDLNNNIQKRLVFINPCIIKKIGTITHIIEGCLSIPKIRASVPRSQNIIVQSLDENGNNFEMEATDLLSVCIQHEIDHLLGKLFIDYLSPFKIQRIHKKINKWSTVYKNHIKLSH</sequence>
<dbReference type="EC" id="3.5.1.88" evidence="1"/>
<dbReference type="EMBL" id="BX248583">
    <property type="protein sequence ID" value="CAD83734.1"/>
    <property type="molecule type" value="Genomic_DNA"/>
</dbReference>
<dbReference type="SMR" id="Q7VQC0"/>
<dbReference type="STRING" id="203907.Bfl219"/>
<dbReference type="KEGG" id="bfl:Bfl219"/>
<dbReference type="eggNOG" id="COG0242">
    <property type="taxonomic scope" value="Bacteria"/>
</dbReference>
<dbReference type="HOGENOM" id="CLU_061901_2_0_6"/>
<dbReference type="OrthoDB" id="9804313at2"/>
<dbReference type="Proteomes" id="UP000002192">
    <property type="component" value="Chromosome"/>
</dbReference>
<dbReference type="GO" id="GO:0046872">
    <property type="term" value="F:metal ion binding"/>
    <property type="evidence" value="ECO:0007669"/>
    <property type="project" value="UniProtKB-KW"/>
</dbReference>
<dbReference type="GO" id="GO:0042586">
    <property type="term" value="F:peptide deformylase activity"/>
    <property type="evidence" value="ECO:0007669"/>
    <property type="project" value="UniProtKB-UniRule"/>
</dbReference>
<dbReference type="GO" id="GO:0043686">
    <property type="term" value="P:co-translational protein modification"/>
    <property type="evidence" value="ECO:0007669"/>
    <property type="project" value="TreeGrafter"/>
</dbReference>
<dbReference type="GO" id="GO:0006412">
    <property type="term" value="P:translation"/>
    <property type="evidence" value="ECO:0007669"/>
    <property type="project" value="UniProtKB-UniRule"/>
</dbReference>
<dbReference type="CDD" id="cd00487">
    <property type="entry name" value="Pep_deformylase"/>
    <property type="match status" value="1"/>
</dbReference>
<dbReference type="Gene3D" id="3.90.45.10">
    <property type="entry name" value="Peptide deformylase"/>
    <property type="match status" value="1"/>
</dbReference>
<dbReference type="HAMAP" id="MF_00163">
    <property type="entry name" value="Pep_deformylase"/>
    <property type="match status" value="1"/>
</dbReference>
<dbReference type="InterPro" id="IPR023635">
    <property type="entry name" value="Peptide_deformylase"/>
</dbReference>
<dbReference type="InterPro" id="IPR036821">
    <property type="entry name" value="Peptide_deformylase_sf"/>
</dbReference>
<dbReference type="NCBIfam" id="TIGR00079">
    <property type="entry name" value="pept_deformyl"/>
    <property type="match status" value="1"/>
</dbReference>
<dbReference type="NCBIfam" id="NF001159">
    <property type="entry name" value="PRK00150.1-3"/>
    <property type="match status" value="1"/>
</dbReference>
<dbReference type="PANTHER" id="PTHR10458">
    <property type="entry name" value="PEPTIDE DEFORMYLASE"/>
    <property type="match status" value="1"/>
</dbReference>
<dbReference type="PANTHER" id="PTHR10458:SF21">
    <property type="entry name" value="PEPTIDE DEFORMYLASE"/>
    <property type="match status" value="1"/>
</dbReference>
<dbReference type="Pfam" id="PF01327">
    <property type="entry name" value="Pep_deformylase"/>
    <property type="match status" value="1"/>
</dbReference>
<dbReference type="PIRSF" id="PIRSF004749">
    <property type="entry name" value="Pep_def"/>
    <property type="match status" value="1"/>
</dbReference>
<dbReference type="PRINTS" id="PR01576">
    <property type="entry name" value="PDEFORMYLASE"/>
</dbReference>
<dbReference type="SUPFAM" id="SSF56420">
    <property type="entry name" value="Peptide deformylase"/>
    <property type="match status" value="1"/>
</dbReference>
<proteinExistence type="inferred from homology"/>
<name>DEF_BLOFL</name>
<organism>
    <name type="scientific">Blochmanniella floridana</name>
    <dbReference type="NCBI Taxonomy" id="203907"/>
    <lineage>
        <taxon>Bacteria</taxon>
        <taxon>Pseudomonadati</taxon>
        <taxon>Pseudomonadota</taxon>
        <taxon>Gammaproteobacteria</taxon>
        <taxon>Enterobacterales</taxon>
        <taxon>Enterobacteriaceae</taxon>
        <taxon>ant endosymbionts</taxon>
        <taxon>Candidatus Blochmanniella</taxon>
    </lineage>
</organism>
<protein>
    <recommendedName>
        <fullName evidence="1">Peptide deformylase</fullName>
        <shortName evidence="1">PDF</shortName>
        <ecNumber evidence="1">3.5.1.88</ecNumber>
    </recommendedName>
    <alternativeName>
        <fullName evidence="1">Polypeptide deformylase</fullName>
    </alternativeName>
</protein>
<gene>
    <name evidence="1" type="primary">def</name>
    <name type="ordered locus">Bfl219</name>
</gene>